<comment type="function">
    <text evidence="1">Removes the formyl group from the N-terminal Met of newly synthesized proteins. Requires at least a dipeptide for an efficient rate of reaction. N-terminal L-methionine is a prerequisite for activity but the enzyme has broad specificity at other positions.</text>
</comment>
<comment type="catalytic activity">
    <reaction evidence="1">
        <text>N-terminal N-formyl-L-methionyl-[peptide] + H2O = N-terminal L-methionyl-[peptide] + formate</text>
        <dbReference type="Rhea" id="RHEA:24420"/>
        <dbReference type="Rhea" id="RHEA-COMP:10639"/>
        <dbReference type="Rhea" id="RHEA-COMP:10640"/>
        <dbReference type="ChEBI" id="CHEBI:15377"/>
        <dbReference type="ChEBI" id="CHEBI:15740"/>
        <dbReference type="ChEBI" id="CHEBI:49298"/>
        <dbReference type="ChEBI" id="CHEBI:64731"/>
        <dbReference type="EC" id="3.5.1.88"/>
    </reaction>
</comment>
<comment type="cofactor">
    <cofactor evidence="1">
        <name>Fe(2+)</name>
        <dbReference type="ChEBI" id="CHEBI:29033"/>
    </cofactor>
    <text evidence="1">Binds 1 Fe(2+) ion.</text>
</comment>
<comment type="similarity">
    <text evidence="1">Belongs to the polypeptide deformylase family.</text>
</comment>
<reference key="1">
    <citation type="submission" date="2007-08" db="EMBL/GenBank/DDBJ databases">
        <authorList>
            <consortium name="The Vibrio harveyi Genome Sequencing Project"/>
            <person name="Bassler B."/>
            <person name="Clifton S.W."/>
            <person name="Fulton L."/>
            <person name="Delehaunty K."/>
            <person name="Fronick C."/>
            <person name="Harrison M."/>
            <person name="Markivic C."/>
            <person name="Fulton R."/>
            <person name="Tin-Wollam A.-M."/>
            <person name="Shah N."/>
            <person name="Pepin K."/>
            <person name="Nash W."/>
            <person name="Thiruvilangam P."/>
            <person name="Bhonagiri V."/>
            <person name="Waters C."/>
            <person name="Tu K.C."/>
            <person name="Irgon J."/>
            <person name="Wilson R.K."/>
        </authorList>
    </citation>
    <scope>NUCLEOTIDE SEQUENCE [LARGE SCALE GENOMIC DNA]</scope>
    <source>
        <strain>ATCC BAA-1116 / BB120</strain>
    </source>
</reference>
<proteinExistence type="inferred from homology"/>
<protein>
    <recommendedName>
        <fullName evidence="1">Peptide deformylase</fullName>
        <shortName evidence="1">PDF</shortName>
        <ecNumber evidence="1">3.5.1.88</ecNumber>
    </recommendedName>
    <alternativeName>
        <fullName evidence="1">Polypeptide deformylase</fullName>
    </alternativeName>
</protein>
<organism>
    <name type="scientific">Vibrio campbellii (strain ATCC BAA-1116)</name>
    <dbReference type="NCBI Taxonomy" id="2902295"/>
    <lineage>
        <taxon>Bacteria</taxon>
        <taxon>Pseudomonadati</taxon>
        <taxon>Pseudomonadota</taxon>
        <taxon>Gammaproteobacteria</taxon>
        <taxon>Vibrionales</taxon>
        <taxon>Vibrionaceae</taxon>
        <taxon>Vibrio</taxon>
    </lineage>
</organism>
<evidence type="ECO:0000255" key="1">
    <source>
        <dbReference type="HAMAP-Rule" id="MF_00163"/>
    </source>
</evidence>
<name>DEF_VIBC1</name>
<accession>A7N121</accession>
<keyword id="KW-0378">Hydrolase</keyword>
<keyword id="KW-0408">Iron</keyword>
<keyword id="KW-0479">Metal-binding</keyword>
<keyword id="KW-0648">Protein biosynthesis</keyword>
<dbReference type="EC" id="3.5.1.88" evidence="1"/>
<dbReference type="EMBL" id="CP000789">
    <property type="protein sequence ID" value="ABU69406.1"/>
    <property type="molecule type" value="Genomic_DNA"/>
</dbReference>
<dbReference type="RefSeq" id="WP_005450979.1">
    <property type="nucleotide sequence ID" value="NC_022269.1"/>
</dbReference>
<dbReference type="SMR" id="A7N121"/>
<dbReference type="GeneID" id="83583340"/>
<dbReference type="KEGG" id="vha:VIBHAR_00391"/>
<dbReference type="PATRIC" id="fig|338187.25.peg.2200"/>
<dbReference type="Proteomes" id="UP000008152">
    <property type="component" value="Chromosome I"/>
</dbReference>
<dbReference type="GO" id="GO:0046872">
    <property type="term" value="F:metal ion binding"/>
    <property type="evidence" value="ECO:0007669"/>
    <property type="project" value="UniProtKB-KW"/>
</dbReference>
<dbReference type="GO" id="GO:0042586">
    <property type="term" value="F:peptide deformylase activity"/>
    <property type="evidence" value="ECO:0007669"/>
    <property type="project" value="UniProtKB-UniRule"/>
</dbReference>
<dbReference type="GO" id="GO:0043686">
    <property type="term" value="P:co-translational protein modification"/>
    <property type="evidence" value="ECO:0007669"/>
    <property type="project" value="TreeGrafter"/>
</dbReference>
<dbReference type="GO" id="GO:0006412">
    <property type="term" value="P:translation"/>
    <property type="evidence" value="ECO:0007669"/>
    <property type="project" value="UniProtKB-UniRule"/>
</dbReference>
<dbReference type="CDD" id="cd00487">
    <property type="entry name" value="Pep_deformylase"/>
    <property type="match status" value="1"/>
</dbReference>
<dbReference type="FunFam" id="3.90.45.10:FF:000001">
    <property type="entry name" value="Peptide deformylase"/>
    <property type="match status" value="1"/>
</dbReference>
<dbReference type="Gene3D" id="3.90.45.10">
    <property type="entry name" value="Peptide deformylase"/>
    <property type="match status" value="1"/>
</dbReference>
<dbReference type="HAMAP" id="MF_00163">
    <property type="entry name" value="Pep_deformylase"/>
    <property type="match status" value="1"/>
</dbReference>
<dbReference type="InterPro" id="IPR023635">
    <property type="entry name" value="Peptide_deformylase"/>
</dbReference>
<dbReference type="InterPro" id="IPR036821">
    <property type="entry name" value="Peptide_deformylase_sf"/>
</dbReference>
<dbReference type="NCBIfam" id="TIGR00079">
    <property type="entry name" value="pept_deformyl"/>
    <property type="match status" value="1"/>
</dbReference>
<dbReference type="NCBIfam" id="NF001159">
    <property type="entry name" value="PRK00150.1-3"/>
    <property type="match status" value="1"/>
</dbReference>
<dbReference type="PANTHER" id="PTHR10458">
    <property type="entry name" value="PEPTIDE DEFORMYLASE"/>
    <property type="match status" value="1"/>
</dbReference>
<dbReference type="PANTHER" id="PTHR10458:SF21">
    <property type="entry name" value="PEPTIDE DEFORMYLASE"/>
    <property type="match status" value="1"/>
</dbReference>
<dbReference type="Pfam" id="PF01327">
    <property type="entry name" value="Pep_deformylase"/>
    <property type="match status" value="1"/>
</dbReference>
<dbReference type="PIRSF" id="PIRSF004749">
    <property type="entry name" value="Pep_def"/>
    <property type="match status" value="1"/>
</dbReference>
<dbReference type="PRINTS" id="PR01576">
    <property type="entry name" value="PDEFORMYLASE"/>
</dbReference>
<dbReference type="SUPFAM" id="SSF56420">
    <property type="entry name" value="Peptide deformylase"/>
    <property type="match status" value="1"/>
</dbReference>
<gene>
    <name evidence="1" type="primary">def</name>
    <name type="ordered locus">VIBHAR_00391</name>
</gene>
<sequence>MSVLQVLTFPDDRLRTVAKPVEEVTPEIQKIVDDMIETMYDEEGIGLAATQVDIHKRIVVIDISETRDEPMVLINPEILEKRGEDGIEEGCLSVPGARALVPRAAEVTVKALDRDGKEYTFEADDLLAICVQHELDHLMGKLFVDYLSPLKRKRIQDKLAKIKRFNEKQQNA</sequence>
<feature type="chain" id="PRO_1000023138" description="Peptide deformylase">
    <location>
        <begin position="1"/>
        <end position="172"/>
    </location>
</feature>
<feature type="active site" evidence="1">
    <location>
        <position position="134"/>
    </location>
</feature>
<feature type="binding site" evidence="1">
    <location>
        <position position="91"/>
    </location>
    <ligand>
        <name>Fe cation</name>
        <dbReference type="ChEBI" id="CHEBI:24875"/>
    </ligand>
</feature>
<feature type="binding site" evidence="1">
    <location>
        <position position="133"/>
    </location>
    <ligand>
        <name>Fe cation</name>
        <dbReference type="ChEBI" id="CHEBI:24875"/>
    </ligand>
</feature>
<feature type="binding site" evidence="1">
    <location>
        <position position="137"/>
    </location>
    <ligand>
        <name>Fe cation</name>
        <dbReference type="ChEBI" id="CHEBI:24875"/>
    </ligand>
</feature>